<organism>
    <name type="scientific">Takifugu rubripes</name>
    <name type="common">Japanese pufferfish</name>
    <name type="synonym">Fugu rubripes</name>
    <dbReference type="NCBI Taxonomy" id="31033"/>
    <lineage>
        <taxon>Eukaryota</taxon>
        <taxon>Metazoa</taxon>
        <taxon>Chordata</taxon>
        <taxon>Craniata</taxon>
        <taxon>Vertebrata</taxon>
        <taxon>Euteleostomi</taxon>
        <taxon>Actinopterygii</taxon>
        <taxon>Neopterygii</taxon>
        <taxon>Teleostei</taxon>
        <taxon>Neoteleostei</taxon>
        <taxon>Acanthomorphata</taxon>
        <taxon>Eupercaria</taxon>
        <taxon>Tetraodontiformes</taxon>
        <taxon>Tetradontoidea</taxon>
        <taxon>Tetraodontidae</taxon>
        <taxon>Takifugu</taxon>
    </lineage>
</organism>
<gene>
    <name type="ORF">F_48D10.1</name>
</gene>
<proteinExistence type="inferred from homology"/>
<dbReference type="EMBL" id="AF013613">
    <property type="protein sequence ID" value="AAB86684.1"/>
    <property type="molecule type" value="Genomic_DNA"/>
</dbReference>
<dbReference type="SMR" id="O42179"/>
<dbReference type="STRING" id="31033.ENSTRUP00000019766"/>
<dbReference type="InParanoid" id="O42179"/>
<dbReference type="Proteomes" id="UP000005226">
    <property type="component" value="Unplaced"/>
</dbReference>
<dbReference type="GO" id="GO:0043005">
    <property type="term" value="C:neuron projection"/>
    <property type="evidence" value="ECO:0007669"/>
    <property type="project" value="TreeGrafter"/>
</dbReference>
<dbReference type="GO" id="GO:0005886">
    <property type="term" value="C:plasma membrane"/>
    <property type="evidence" value="ECO:0007669"/>
    <property type="project" value="UniProtKB-SubCell"/>
</dbReference>
<dbReference type="GO" id="GO:0042923">
    <property type="term" value="F:neuropeptide binding"/>
    <property type="evidence" value="ECO:0007669"/>
    <property type="project" value="TreeGrafter"/>
</dbReference>
<dbReference type="GO" id="GO:0004994">
    <property type="term" value="F:somatostatin receptor activity"/>
    <property type="evidence" value="ECO:0007669"/>
    <property type="project" value="TreeGrafter"/>
</dbReference>
<dbReference type="GO" id="GO:0071385">
    <property type="term" value="P:cellular response to glucocorticoid stimulus"/>
    <property type="evidence" value="ECO:0007669"/>
    <property type="project" value="TreeGrafter"/>
</dbReference>
<dbReference type="GO" id="GO:0050796">
    <property type="term" value="P:regulation of insulin secretion"/>
    <property type="evidence" value="ECO:0007669"/>
    <property type="project" value="TreeGrafter"/>
</dbReference>
<dbReference type="Gene3D" id="1.20.1070.10">
    <property type="entry name" value="Rhodopsin 7-helix transmembrane proteins"/>
    <property type="match status" value="1"/>
</dbReference>
<dbReference type="InterPro" id="IPR000276">
    <property type="entry name" value="GPCR_Rhodpsn"/>
</dbReference>
<dbReference type="InterPro" id="IPR017452">
    <property type="entry name" value="GPCR_Rhodpsn_7TM"/>
</dbReference>
<dbReference type="PANTHER" id="PTHR24229">
    <property type="entry name" value="NEUROPEPTIDES RECEPTOR"/>
    <property type="match status" value="1"/>
</dbReference>
<dbReference type="PANTHER" id="PTHR24229:SF20">
    <property type="entry name" value="SOMATOSTATIN RECEPTOR TYPE 5"/>
    <property type="match status" value="1"/>
</dbReference>
<dbReference type="Pfam" id="PF00001">
    <property type="entry name" value="7tm_1"/>
    <property type="match status" value="1"/>
</dbReference>
<dbReference type="PRINTS" id="PR00237">
    <property type="entry name" value="GPCRRHODOPSN"/>
</dbReference>
<dbReference type="SUPFAM" id="SSF81321">
    <property type="entry name" value="Family A G protein-coupled receptor-like"/>
    <property type="match status" value="1"/>
</dbReference>
<dbReference type="PROSITE" id="PS00237">
    <property type="entry name" value="G_PROTEIN_RECEP_F1_1"/>
    <property type="match status" value="1"/>
</dbReference>
<dbReference type="PROSITE" id="PS50262">
    <property type="entry name" value="G_PROTEIN_RECEP_F1_2"/>
    <property type="match status" value="1"/>
</dbReference>
<sequence>MEPLDQTPGFPLSPEPNYWYETTPSLLLVSYPHLLDISSNQSTQSVPFQGSSALLTAVIYITVFVVGLTGNTLAIYVVLRYAGMKTVTNIYILNLAVADELYIVGLPFLATQNVLSYWPFGSFLCRVVMTADSMNQFTSIFCLTVMSIDRYLAVVHPIRSTKWRHPRVAKVVSAAVWAVSFVVVLPVVIFSDVQVRPSRPLQVGTSSKCLVKRVQETFNSCNMIWPEPKNVWSTAFILYTAMVGFFGPLLIICLCYLLIVIKVRHRMSAAQVGAVVSTCPLNICCLSRR</sequence>
<reference key="1">
    <citation type="submission" date="1997-11" db="EMBL/GenBank/DDBJ databases">
        <authorList>
            <person name="Hawkins J."/>
            <person name="Gillam B."/>
        </authorList>
    </citation>
    <scope>NUCLEOTIDE SEQUENCE [GENOMIC DNA]</scope>
</reference>
<feature type="chain" id="PRO_0000070133" description="Somatostatin-like receptor F_48D10.1">
    <location>
        <begin position="1"/>
        <end position="289"/>
    </location>
</feature>
<feature type="topological domain" description="Extracellular" evidence="2">
    <location>
        <begin position="1"/>
        <end position="57"/>
    </location>
</feature>
<feature type="transmembrane region" description="Helical; Name=1" evidence="2">
    <location>
        <begin position="58"/>
        <end position="79"/>
    </location>
</feature>
<feature type="topological domain" description="Cytoplasmic" evidence="2">
    <location>
        <begin position="80"/>
        <end position="89"/>
    </location>
</feature>
<feature type="transmembrane region" description="Helical; Name=2" evidence="2">
    <location>
        <begin position="90"/>
        <end position="110"/>
    </location>
</feature>
<feature type="topological domain" description="Extracellular" evidence="2">
    <location>
        <begin position="111"/>
        <end position="126"/>
    </location>
</feature>
<feature type="transmembrane region" description="Helical; Name=3" evidence="2">
    <location>
        <begin position="127"/>
        <end position="148"/>
    </location>
</feature>
<feature type="topological domain" description="Cytoplasmic" evidence="2">
    <location>
        <begin position="149"/>
        <end position="170"/>
    </location>
</feature>
<feature type="transmembrane region" description="Helical; Name=4" evidence="2">
    <location>
        <begin position="171"/>
        <end position="191"/>
    </location>
</feature>
<feature type="topological domain" description="Extracellular" evidence="2">
    <location>
        <begin position="192"/>
        <end position="240"/>
    </location>
</feature>
<feature type="transmembrane region" description="Helical; Name=5" evidence="2">
    <location>
        <begin position="241"/>
        <end position="261"/>
    </location>
</feature>
<feature type="topological domain" description="Cytoplasmic" evidence="2">
    <location>
        <begin position="262"/>
        <end position="289"/>
    </location>
</feature>
<feature type="glycosylation site" description="N-linked (GlcNAc...) asparagine" evidence="2">
    <location>
        <position position="40"/>
    </location>
</feature>
<feature type="disulfide bond" evidence="3">
    <location>
        <begin position="125"/>
        <end position="221"/>
    </location>
</feature>
<protein>
    <recommendedName>
        <fullName>Somatostatin-like receptor F_48D10.1</fullName>
    </recommendedName>
</protein>
<keyword id="KW-1003">Cell membrane</keyword>
<keyword id="KW-1015">Disulfide bond</keyword>
<keyword id="KW-0297">G-protein coupled receptor</keyword>
<keyword id="KW-0325">Glycoprotein</keyword>
<keyword id="KW-0472">Membrane</keyword>
<keyword id="KW-0675">Receptor</keyword>
<keyword id="KW-1185">Reference proteome</keyword>
<keyword id="KW-0807">Transducer</keyword>
<keyword id="KW-0812">Transmembrane</keyword>
<keyword id="KW-1133">Transmembrane helix</keyword>
<accession>O42179</accession>
<evidence type="ECO:0000250" key="1"/>
<evidence type="ECO:0000255" key="2"/>
<evidence type="ECO:0000255" key="3">
    <source>
        <dbReference type="PROSITE-ProRule" id="PRU00521"/>
    </source>
</evidence>
<evidence type="ECO:0000305" key="4"/>
<comment type="subcellular location">
    <subcellularLocation>
        <location evidence="1">Cell membrane</location>
        <topology evidence="1">Multi-pass membrane protein</topology>
    </subcellularLocation>
</comment>
<comment type="similarity">
    <text evidence="3">Belongs to the G-protein coupled receptor 1 family.</text>
</comment>
<comment type="caution">
    <text evidence="4">Seems to lack the C-terminal part (TM6 and TM7).</text>
</comment>
<name>SSRL_TAKRU</name>